<gene>
    <name evidence="1" type="primary">rppH</name>
    <name evidence="1" type="synonym">nudH</name>
    <name type="ordered locus">SPC_3062</name>
</gene>
<comment type="function">
    <text evidence="1">Accelerates the degradation of transcripts by removing pyrophosphate from the 5'-end of triphosphorylated RNA, leading to a more labile monophosphorylated state that can stimulate subsequent ribonuclease cleavage.</text>
</comment>
<comment type="cofactor">
    <cofactor evidence="1">
        <name>a divalent metal cation</name>
        <dbReference type="ChEBI" id="CHEBI:60240"/>
    </cofactor>
</comment>
<comment type="similarity">
    <text evidence="1">Belongs to the Nudix hydrolase family. RppH subfamily.</text>
</comment>
<protein>
    <recommendedName>
        <fullName evidence="1">RNA pyrophosphohydrolase</fullName>
        <ecNumber evidence="1">3.6.1.-</ecNumber>
    </recommendedName>
    <alternativeName>
        <fullName evidence="1">(Di)nucleoside polyphosphate hydrolase</fullName>
    </alternativeName>
</protein>
<reference key="1">
    <citation type="journal article" date="2009" name="PLoS ONE">
        <title>Salmonella paratyphi C: genetic divergence from Salmonella choleraesuis and pathogenic convergence with Salmonella typhi.</title>
        <authorList>
            <person name="Liu W.-Q."/>
            <person name="Feng Y."/>
            <person name="Wang Y."/>
            <person name="Zou Q.-H."/>
            <person name="Chen F."/>
            <person name="Guo J.-T."/>
            <person name="Peng Y.-H."/>
            <person name="Jin Y."/>
            <person name="Li Y.-G."/>
            <person name="Hu S.-N."/>
            <person name="Johnston R.N."/>
            <person name="Liu G.-R."/>
            <person name="Liu S.-L."/>
        </authorList>
    </citation>
    <scope>NUCLEOTIDE SEQUENCE [LARGE SCALE GENOMIC DNA]</scope>
    <source>
        <strain>RKS4594</strain>
    </source>
</reference>
<organism>
    <name type="scientific">Salmonella paratyphi C (strain RKS4594)</name>
    <dbReference type="NCBI Taxonomy" id="476213"/>
    <lineage>
        <taxon>Bacteria</taxon>
        <taxon>Pseudomonadati</taxon>
        <taxon>Pseudomonadota</taxon>
        <taxon>Gammaproteobacteria</taxon>
        <taxon>Enterobacterales</taxon>
        <taxon>Enterobacteriaceae</taxon>
        <taxon>Salmonella</taxon>
    </lineage>
</organism>
<sequence length="176" mass="20806">MIDDDGYRPNVGIVICNRQGQVMWARRFGQHSWQFPQGGINPGESAEQAMYRELFEEVGLSRKDVRILASTRNWLRYKLPKRLVRWDTKPVCIGQKQKWFLLQLMSADAEINMQTSSTPEFDGWRWVSYWYPVRQVVSFKRDVYRRVMKEFASVVMALQDNPPKLQSAPAYRRKRG</sequence>
<dbReference type="EC" id="3.6.1.-" evidence="1"/>
<dbReference type="EMBL" id="CP000857">
    <property type="protein sequence ID" value="ACN47150.1"/>
    <property type="molecule type" value="Genomic_DNA"/>
</dbReference>
<dbReference type="RefSeq" id="WP_000564481.1">
    <property type="nucleotide sequence ID" value="NC_012125.1"/>
</dbReference>
<dbReference type="SMR" id="C0PXJ2"/>
<dbReference type="KEGG" id="sei:SPC_3062"/>
<dbReference type="HOGENOM" id="CLU_087195_3_2_6"/>
<dbReference type="Proteomes" id="UP000001599">
    <property type="component" value="Chromosome"/>
</dbReference>
<dbReference type="GO" id="GO:0005737">
    <property type="term" value="C:cytoplasm"/>
    <property type="evidence" value="ECO:0007669"/>
    <property type="project" value="TreeGrafter"/>
</dbReference>
<dbReference type="GO" id="GO:0034353">
    <property type="term" value="F:mRNA 5'-diphosphatase activity"/>
    <property type="evidence" value="ECO:0007669"/>
    <property type="project" value="TreeGrafter"/>
</dbReference>
<dbReference type="GO" id="GO:0006402">
    <property type="term" value="P:mRNA catabolic process"/>
    <property type="evidence" value="ECO:0007669"/>
    <property type="project" value="TreeGrafter"/>
</dbReference>
<dbReference type="CDD" id="cd03671">
    <property type="entry name" value="NUDIX_Ap4A_hydrolase_plant_like"/>
    <property type="match status" value="1"/>
</dbReference>
<dbReference type="FunFam" id="3.90.79.10:FF:000001">
    <property type="entry name" value="RNA pyrophosphohydrolase"/>
    <property type="match status" value="1"/>
</dbReference>
<dbReference type="Gene3D" id="3.90.79.10">
    <property type="entry name" value="Nucleoside Triphosphate Pyrophosphohydrolase"/>
    <property type="match status" value="1"/>
</dbReference>
<dbReference type="HAMAP" id="MF_00298">
    <property type="entry name" value="Nudix_RppH"/>
    <property type="match status" value="1"/>
</dbReference>
<dbReference type="InterPro" id="IPR020476">
    <property type="entry name" value="Nudix_hydrolase"/>
</dbReference>
<dbReference type="InterPro" id="IPR015797">
    <property type="entry name" value="NUDIX_hydrolase-like_dom_sf"/>
</dbReference>
<dbReference type="InterPro" id="IPR020084">
    <property type="entry name" value="NUDIX_hydrolase_CS"/>
</dbReference>
<dbReference type="InterPro" id="IPR000086">
    <property type="entry name" value="NUDIX_hydrolase_dom"/>
</dbReference>
<dbReference type="InterPro" id="IPR022927">
    <property type="entry name" value="RppH"/>
</dbReference>
<dbReference type="NCBIfam" id="NF001934">
    <property type="entry name" value="PRK00714.1-1"/>
    <property type="match status" value="1"/>
</dbReference>
<dbReference type="NCBIfam" id="NF001937">
    <property type="entry name" value="PRK00714.1-4"/>
    <property type="match status" value="1"/>
</dbReference>
<dbReference type="NCBIfam" id="NF001938">
    <property type="entry name" value="PRK00714.1-5"/>
    <property type="match status" value="1"/>
</dbReference>
<dbReference type="PANTHER" id="PTHR23114">
    <property type="entry name" value="M7GPPPN-MRNA HYDROLASE"/>
    <property type="match status" value="1"/>
</dbReference>
<dbReference type="PANTHER" id="PTHR23114:SF17">
    <property type="entry name" value="M7GPPPN-MRNA HYDROLASE"/>
    <property type="match status" value="1"/>
</dbReference>
<dbReference type="Pfam" id="PF00293">
    <property type="entry name" value="NUDIX"/>
    <property type="match status" value="1"/>
</dbReference>
<dbReference type="PRINTS" id="PR00502">
    <property type="entry name" value="NUDIXFAMILY"/>
</dbReference>
<dbReference type="SUPFAM" id="SSF55811">
    <property type="entry name" value="Nudix"/>
    <property type="match status" value="1"/>
</dbReference>
<dbReference type="PROSITE" id="PS51462">
    <property type="entry name" value="NUDIX"/>
    <property type="match status" value="1"/>
</dbReference>
<dbReference type="PROSITE" id="PS00893">
    <property type="entry name" value="NUDIX_BOX"/>
    <property type="match status" value="1"/>
</dbReference>
<proteinExistence type="inferred from homology"/>
<feature type="chain" id="PRO_1000191848" description="RNA pyrophosphohydrolase">
    <location>
        <begin position="1"/>
        <end position="176"/>
    </location>
</feature>
<feature type="domain" description="Nudix hydrolase" evidence="1">
    <location>
        <begin position="6"/>
        <end position="149"/>
    </location>
</feature>
<feature type="short sequence motif" description="Nudix box">
    <location>
        <begin position="38"/>
        <end position="59"/>
    </location>
</feature>
<name>RPPH_SALPC</name>
<keyword id="KW-0378">Hydrolase</keyword>
<evidence type="ECO:0000255" key="1">
    <source>
        <dbReference type="HAMAP-Rule" id="MF_00298"/>
    </source>
</evidence>
<accession>C0PXJ2</accession>